<accession>A7GLX6</accession>
<dbReference type="EC" id="3.1.-.-" evidence="1"/>
<dbReference type="EMBL" id="CP000764">
    <property type="protein sequence ID" value="ABS21134.1"/>
    <property type="molecule type" value="Genomic_DNA"/>
</dbReference>
<dbReference type="RefSeq" id="WP_011983888.1">
    <property type="nucleotide sequence ID" value="NC_009674.1"/>
</dbReference>
<dbReference type="SMR" id="A7GLX6"/>
<dbReference type="STRING" id="315749.Bcer98_0796"/>
<dbReference type="GeneID" id="33896162"/>
<dbReference type="KEGG" id="bcy:Bcer98_0796"/>
<dbReference type="eggNOG" id="COG3481">
    <property type="taxonomic scope" value="Bacteria"/>
</dbReference>
<dbReference type="HOGENOM" id="CLU_056349_2_0_9"/>
<dbReference type="OrthoDB" id="9778453at2"/>
<dbReference type="Proteomes" id="UP000002300">
    <property type="component" value="Chromosome"/>
</dbReference>
<dbReference type="GO" id="GO:0000175">
    <property type="term" value="F:3'-5'-RNA exonuclease activity"/>
    <property type="evidence" value="ECO:0007669"/>
    <property type="project" value="UniProtKB-UniRule"/>
</dbReference>
<dbReference type="GO" id="GO:0003676">
    <property type="term" value="F:nucleic acid binding"/>
    <property type="evidence" value="ECO:0007669"/>
    <property type="project" value="InterPro"/>
</dbReference>
<dbReference type="GO" id="GO:0031125">
    <property type="term" value="P:rRNA 3'-end processing"/>
    <property type="evidence" value="ECO:0007669"/>
    <property type="project" value="TreeGrafter"/>
</dbReference>
<dbReference type="CDD" id="cd00077">
    <property type="entry name" value="HDc"/>
    <property type="match status" value="1"/>
</dbReference>
<dbReference type="CDD" id="cd04492">
    <property type="entry name" value="YhaM_OBF_like"/>
    <property type="match status" value="1"/>
</dbReference>
<dbReference type="FunFam" id="1.10.3210.10:FF:000008">
    <property type="entry name" value="3'-5' exoribonuclease YhaM"/>
    <property type="match status" value="1"/>
</dbReference>
<dbReference type="Gene3D" id="1.10.3210.10">
    <property type="entry name" value="Hypothetical protein af1432"/>
    <property type="match status" value="1"/>
</dbReference>
<dbReference type="Gene3D" id="2.40.50.140">
    <property type="entry name" value="Nucleic acid-binding proteins"/>
    <property type="match status" value="1"/>
</dbReference>
<dbReference type="HAMAP" id="MF_01427">
    <property type="entry name" value="3_5_Exoribonuc_YhaM"/>
    <property type="match status" value="1"/>
</dbReference>
<dbReference type="InterPro" id="IPR020873">
    <property type="entry name" value="3'-5'_exoribonuclease_YhaM"/>
</dbReference>
<dbReference type="InterPro" id="IPR003607">
    <property type="entry name" value="HD/PDEase_dom"/>
</dbReference>
<dbReference type="InterPro" id="IPR006674">
    <property type="entry name" value="HD_domain"/>
</dbReference>
<dbReference type="InterPro" id="IPR012340">
    <property type="entry name" value="NA-bd_OB-fold"/>
</dbReference>
<dbReference type="InterPro" id="IPR004365">
    <property type="entry name" value="NA-bd_OB_tRNA"/>
</dbReference>
<dbReference type="InterPro" id="IPR050798">
    <property type="entry name" value="YhaM_exoribonuc/phosphodiest"/>
</dbReference>
<dbReference type="NCBIfam" id="NF010007">
    <property type="entry name" value="PRK13480.1"/>
    <property type="match status" value="1"/>
</dbReference>
<dbReference type="PANTHER" id="PTHR37294">
    <property type="entry name" value="3'-5' EXORIBONUCLEASE YHAM"/>
    <property type="match status" value="1"/>
</dbReference>
<dbReference type="PANTHER" id="PTHR37294:SF1">
    <property type="entry name" value="3'-5' EXORIBONUCLEASE YHAM"/>
    <property type="match status" value="1"/>
</dbReference>
<dbReference type="Pfam" id="PF01966">
    <property type="entry name" value="HD"/>
    <property type="match status" value="1"/>
</dbReference>
<dbReference type="Pfam" id="PF01336">
    <property type="entry name" value="tRNA_anti-codon"/>
    <property type="match status" value="1"/>
</dbReference>
<dbReference type="SMART" id="SM00471">
    <property type="entry name" value="HDc"/>
    <property type="match status" value="1"/>
</dbReference>
<dbReference type="SUPFAM" id="SSF109604">
    <property type="entry name" value="HD-domain/PDEase-like"/>
    <property type="match status" value="1"/>
</dbReference>
<dbReference type="SUPFAM" id="SSF50249">
    <property type="entry name" value="Nucleic acid-binding proteins"/>
    <property type="match status" value="1"/>
</dbReference>
<dbReference type="PROSITE" id="PS51831">
    <property type="entry name" value="HD"/>
    <property type="match status" value="1"/>
</dbReference>
<evidence type="ECO:0000255" key="1">
    <source>
        <dbReference type="HAMAP-Rule" id="MF_01427"/>
    </source>
</evidence>
<evidence type="ECO:0000255" key="2">
    <source>
        <dbReference type="PROSITE-ProRule" id="PRU01175"/>
    </source>
</evidence>
<reference key="1">
    <citation type="journal article" date="2008" name="Chem. Biol. Interact.">
        <title>Extending the Bacillus cereus group genomics to putative food-borne pathogens of different toxicity.</title>
        <authorList>
            <person name="Lapidus A."/>
            <person name="Goltsman E."/>
            <person name="Auger S."/>
            <person name="Galleron N."/>
            <person name="Segurens B."/>
            <person name="Dossat C."/>
            <person name="Land M.L."/>
            <person name="Broussolle V."/>
            <person name="Brillard J."/>
            <person name="Guinebretiere M.-H."/>
            <person name="Sanchis V."/>
            <person name="Nguen-the C."/>
            <person name="Lereclus D."/>
            <person name="Richardson P."/>
            <person name="Wincker P."/>
            <person name="Weissenbach J."/>
            <person name="Ehrlich S.D."/>
            <person name="Sorokin A."/>
        </authorList>
    </citation>
    <scope>NUCLEOTIDE SEQUENCE [LARGE SCALE GENOMIC DNA]</scope>
    <source>
        <strain>DSM 22905 / CIP 110041 / 391-98 / NVH 391-98</strain>
    </source>
</reference>
<sequence length="318" mass="36134">MKKKIAEYEVGEQVDLFLLIKTATKGIASNGKPFLTVILQDQSGDIEAKLWDVSPEVERQYTAETIVKVAGDIQNYKGRIQLRVKQIRVANPNEVTDISDFVEKAPVKKEDMVEKITQYIFEMRNPNIQRLTRHLLNKHQNDFLDYPAATKNHHEFVSGLAYHVVSMLDLAKAISTLYPSLDKDLLYAGVILHDLGKVIELSGPISTTYTLEGNLLGHISIMVNEIGKAAEELKIEGEEVLILQHIVLSHHGKAEWGSPKPPLVKEAEILHYIDNLDAKMNMMDRALGRTKPGEYTERVFALDNRSFYKPKFQTYYDK</sequence>
<name>YHAM_BACCN</name>
<gene>
    <name evidence="1" type="primary">yhaM</name>
    <name type="ordered locus">Bcer98_0796</name>
</gene>
<proteinExistence type="inferred from homology"/>
<comment type="function">
    <text evidence="1">Shows a 3'-5' exoribonuclease activity.</text>
</comment>
<comment type="similarity">
    <text evidence="1">Belongs to the YhaM family.</text>
</comment>
<keyword id="KW-0269">Exonuclease</keyword>
<keyword id="KW-0378">Hydrolase</keyword>
<keyword id="KW-0540">Nuclease</keyword>
<feature type="chain" id="PRO_1000087427" description="3'-5' exoribonuclease YhaM">
    <location>
        <begin position="1"/>
        <end position="318"/>
    </location>
</feature>
<feature type="domain" description="HD" evidence="2">
    <location>
        <begin position="163"/>
        <end position="279"/>
    </location>
</feature>
<organism>
    <name type="scientific">Bacillus cytotoxicus (strain DSM 22905 / CIP 110041 / 391-98 / NVH 391-98)</name>
    <dbReference type="NCBI Taxonomy" id="315749"/>
    <lineage>
        <taxon>Bacteria</taxon>
        <taxon>Bacillati</taxon>
        <taxon>Bacillota</taxon>
        <taxon>Bacilli</taxon>
        <taxon>Bacillales</taxon>
        <taxon>Bacillaceae</taxon>
        <taxon>Bacillus</taxon>
        <taxon>Bacillus cereus group</taxon>
    </lineage>
</organism>
<protein>
    <recommendedName>
        <fullName evidence="1">3'-5' exoribonuclease YhaM</fullName>
        <ecNumber evidence="1">3.1.-.-</ecNumber>
    </recommendedName>
</protein>